<organism>
    <name type="scientific">Salinibacter ruber (strain DSM 13855 / M31)</name>
    <dbReference type="NCBI Taxonomy" id="309807"/>
    <lineage>
        <taxon>Bacteria</taxon>
        <taxon>Pseudomonadati</taxon>
        <taxon>Rhodothermota</taxon>
        <taxon>Rhodothermia</taxon>
        <taxon>Rhodothermales</taxon>
        <taxon>Salinibacteraceae</taxon>
        <taxon>Salinibacter</taxon>
    </lineage>
</organism>
<protein>
    <recommendedName>
        <fullName evidence="1">1-(5-phosphoribosyl)-5-[(5-phosphoribosylamino)methylideneamino] imidazole-4-carboxamide isomerase</fullName>
        <ecNumber evidence="1">5.3.1.16</ecNumber>
    </recommendedName>
    <alternativeName>
        <fullName evidence="1">Phosphoribosylformimino-5-aminoimidazole carboxamide ribotide isomerase</fullName>
    </alternativeName>
</protein>
<keyword id="KW-0028">Amino-acid biosynthesis</keyword>
<keyword id="KW-0963">Cytoplasm</keyword>
<keyword id="KW-0368">Histidine biosynthesis</keyword>
<keyword id="KW-0413">Isomerase</keyword>
<keyword id="KW-1185">Reference proteome</keyword>
<sequence>MPLVIPAIDIRDGRCVRLHQGDYDNETVYFEDPVKMAKLWRVQNAQTLHVVDLDAARGEGEHNRDVIGKMCDALDIPIQLGGGIRSMDQIEAALDRGVYRVILGTAAVRNPDFVERAVEQFSARRVVVSIDARDGEVRVQGWTEGSGLDAVAFAKDMEQRGVRRLVYTDISRDGTMDGPNIQAYRTLGRQLAHAKVTASGGVGEHDDLLDIQTLQPYGVDSVIVGTALYENRFPCQQFWAWQDKDAVDLDTFSTASLR</sequence>
<name>HIS4_SALRD</name>
<dbReference type="EC" id="5.3.1.16" evidence="1"/>
<dbReference type="EMBL" id="CP000159">
    <property type="protein sequence ID" value="ABC44254.1"/>
    <property type="molecule type" value="Genomic_DNA"/>
</dbReference>
<dbReference type="RefSeq" id="WP_011404311.1">
    <property type="nucleotide sequence ID" value="NC_007677.1"/>
</dbReference>
<dbReference type="RefSeq" id="YP_445685.1">
    <property type="nucleotide sequence ID" value="NC_007677.1"/>
</dbReference>
<dbReference type="SMR" id="Q2S296"/>
<dbReference type="STRING" id="309807.SRU_1564"/>
<dbReference type="EnsemblBacteria" id="ABC44254">
    <property type="protein sequence ID" value="ABC44254"/>
    <property type="gene ID" value="SRU_1564"/>
</dbReference>
<dbReference type="KEGG" id="sru:SRU_1564"/>
<dbReference type="PATRIC" id="fig|309807.25.peg.1618"/>
<dbReference type="eggNOG" id="COG0106">
    <property type="taxonomic scope" value="Bacteria"/>
</dbReference>
<dbReference type="HOGENOM" id="CLU_048577_1_2_10"/>
<dbReference type="OrthoDB" id="9807749at2"/>
<dbReference type="UniPathway" id="UPA00031">
    <property type="reaction ID" value="UER00009"/>
</dbReference>
<dbReference type="Proteomes" id="UP000008674">
    <property type="component" value="Chromosome"/>
</dbReference>
<dbReference type="GO" id="GO:0005737">
    <property type="term" value="C:cytoplasm"/>
    <property type="evidence" value="ECO:0007669"/>
    <property type="project" value="UniProtKB-SubCell"/>
</dbReference>
<dbReference type="GO" id="GO:0003949">
    <property type="term" value="F:1-(5-phosphoribosyl)-5-[(5-phosphoribosylamino)methylideneamino]imidazole-4-carboxamide isomerase activity"/>
    <property type="evidence" value="ECO:0007669"/>
    <property type="project" value="UniProtKB-UniRule"/>
</dbReference>
<dbReference type="GO" id="GO:0000105">
    <property type="term" value="P:L-histidine biosynthetic process"/>
    <property type="evidence" value="ECO:0007669"/>
    <property type="project" value="UniProtKB-UniRule"/>
</dbReference>
<dbReference type="GO" id="GO:0000162">
    <property type="term" value="P:L-tryptophan biosynthetic process"/>
    <property type="evidence" value="ECO:0007669"/>
    <property type="project" value="TreeGrafter"/>
</dbReference>
<dbReference type="CDD" id="cd04732">
    <property type="entry name" value="HisA"/>
    <property type="match status" value="1"/>
</dbReference>
<dbReference type="FunFam" id="3.20.20.70:FF:000009">
    <property type="entry name" value="1-(5-phosphoribosyl)-5-[(5-phosphoribosylamino)methylideneamino] imidazole-4-carboxamide isomerase"/>
    <property type="match status" value="1"/>
</dbReference>
<dbReference type="Gene3D" id="3.20.20.70">
    <property type="entry name" value="Aldolase class I"/>
    <property type="match status" value="1"/>
</dbReference>
<dbReference type="HAMAP" id="MF_01014">
    <property type="entry name" value="HisA"/>
    <property type="match status" value="1"/>
</dbReference>
<dbReference type="InterPro" id="IPR013785">
    <property type="entry name" value="Aldolase_TIM"/>
</dbReference>
<dbReference type="InterPro" id="IPR006062">
    <property type="entry name" value="His_biosynth"/>
</dbReference>
<dbReference type="InterPro" id="IPR006063">
    <property type="entry name" value="HisA_bact_arch"/>
</dbReference>
<dbReference type="InterPro" id="IPR044524">
    <property type="entry name" value="Isoase_HisA-like"/>
</dbReference>
<dbReference type="InterPro" id="IPR023016">
    <property type="entry name" value="Isoase_HisA-like_bact"/>
</dbReference>
<dbReference type="InterPro" id="IPR011060">
    <property type="entry name" value="RibuloseP-bd_barrel"/>
</dbReference>
<dbReference type="NCBIfam" id="TIGR00007">
    <property type="entry name" value="1-(5-phosphoribosyl)-5-[(5-phosphoribosylamino)methylideneamino]imidazole-4-carboxamide isomerase"/>
    <property type="match status" value="1"/>
</dbReference>
<dbReference type="PANTHER" id="PTHR43090">
    <property type="entry name" value="1-(5-PHOSPHORIBOSYL)-5-[(5-PHOSPHORIBOSYLAMINO)METHYLIDENEAMINO] IMIDAZOLE-4-CARBOXAMIDE ISOMERASE"/>
    <property type="match status" value="1"/>
</dbReference>
<dbReference type="PANTHER" id="PTHR43090:SF2">
    <property type="entry name" value="1-(5-PHOSPHORIBOSYL)-5-[(5-PHOSPHORIBOSYLAMINO)METHYLIDENEAMINO] IMIDAZOLE-4-CARBOXAMIDE ISOMERASE"/>
    <property type="match status" value="1"/>
</dbReference>
<dbReference type="Pfam" id="PF00977">
    <property type="entry name" value="His_biosynth"/>
    <property type="match status" value="1"/>
</dbReference>
<dbReference type="SUPFAM" id="SSF51366">
    <property type="entry name" value="Ribulose-phoshate binding barrel"/>
    <property type="match status" value="1"/>
</dbReference>
<comment type="catalytic activity">
    <reaction evidence="1">
        <text>1-(5-phospho-beta-D-ribosyl)-5-[(5-phospho-beta-D-ribosylamino)methylideneamino]imidazole-4-carboxamide = 5-[(5-phospho-1-deoxy-D-ribulos-1-ylimino)methylamino]-1-(5-phospho-beta-D-ribosyl)imidazole-4-carboxamide</text>
        <dbReference type="Rhea" id="RHEA:15469"/>
        <dbReference type="ChEBI" id="CHEBI:58435"/>
        <dbReference type="ChEBI" id="CHEBI:58525"/>
        <dbReference type="EC" id="5.3.1.16"/>
    </reaction>
</comment>
<comment type="pathway">
    <text evidence="1">Amino-acid biosynthesis; L-histidine biosynthesis; L-histidine from 5-phospho-alpha-D-ribose 1-diphosphate: step 4/9.</text>
</comment>
<comment type="subcellular location">
    <subcellularLocation>
        <location evidence="1">Cytoplasm</location>
    </subcellularLocation>
</comment>
<comment type="similarity">
    <text evidence="1">Belongs to the HisA/HisF family.</text>
</comment>
<reference key="1">
    <citation type="journal article" date="2005" name="Proc. Natl. Acad. Sci. U.S.A.">
        <title>The genome of Salinibacter ruber: convergence and gene exchange among hyperhalophilic bacteria and archaea.</title>
        <authorList>
            <person name="Mongodin E.F."/>
            <person name="Nelson K.E."/>
            <person name="Daugherty S."/>
            <person name="DeBoy R.T."/>
            <person name="Wister J."/>
            <person name="Khouri H."/>
            <person name="Weidman J."/>
            <person name="Walsh D.A."/>
            <person name="Papke R.T."/>
            <person name="Sanchez Perez G."/>
            <person name="Sharma A.K."/>
            <person name="Nesbo C.L."/>
            <person name="MacLeod D."/>
            <person name="Bapteste E."/>
            <person name="Doolittle W.F."/>
            <person name="Charlebois R.L."/>
            <person name="Legault B."/>
            <person name="Rodriguez-Valera F."/>
        </authorList>
    </citation>
    <scope>NUCLEOTIDE SEQUENCE [LARGE SCALE GENOMIC DNA]</scope>
    <source>
        <strain>DSM 13855 / CECT 5946 / M31</strain>
    </source>
</reference>
<feature type="chain" id="PRO_0000290533" description="1-(5-phosphoribosyl)-5-[(5-phosphoribosylamino)methylideneamino] imidazole-4-carboxamide isomerase">
    <location>
        <begin position="1"/>
        <end position="258"/>
    </location>
</feature>
<feature type="active site" description="Proton acceptor" evidence="1">
    <location>
        <position position="9"/>
    </location>
</feature>
<feature type="active site" description="Proton donor" evidence="1">
    <location>
        <position position="131"/>
    </location>
</feature>
<evidence type="ECO:0000255" key="1">
    <source>
        <dbReference type="HAMAP-Rule" id="MF_01014"/>
    </source>
</evidence>
<proteinExistence type="inferred from homology"/>
<accession>Q2S296</accession>
<gene>
    <name evidence="1" type="primary">hisA</name>
    <name type="ordered locus">SRU_1564</name>
</gene>